<organism>
    <name type="scientific">Cytophaga hutchinsonii (strain ATCC 33406 / DSM 1761 / CIP 103989 / NBRC 15051 / NCIMB 9469 / D465)</name>
    <dbReference type="NCBI Taxonomy" id="269798"/>
    <lineage>
        <taxon>Bacteria</taxon>
        <taxon>Pseudomonadati</taxon>
        <taxon>Bacteroidota</taxon>
        <taxon>Cytophagia</taxon>
        <taxon>Cytophagales</taxon>
        <taxon>Cytophagaceae</taxon>
        <taxon>Cytophaga</taxon>
    </lineage>
</organism>
<gene>
    <name evidence="1" type="primary">rplK</name>
    <name type="ordered locus">CHU_3173</name>
</gene>
<reference key="1">
    <citation type="journal article" date="2007" name="Appl. Environ. Microbiol.">
        <title>Genome sequence of the cellulolytic gliding bacterium Cytophaga hutchinsonii.</title>
        <authorList>
            <person name="Xie G."/>
            <person name="Bruce D.C."/>
            <person name="Challacombe J.F."/>
            <person name="Chertkov O."/>
            <person name="Detter J.C."/>
            <person name="Gilna P."/>
            <person name="Han C.S."/>
            <person name="Lucas S."/>
            <person name="Misra M."/>
            <person name="Myers G.L."/>
            <person name="Richardson P."/>
            <person name="Tapia R."/>
            <person name="Thayer N."/>
            <person name="Thompson L.S."/>
            <person name="Brettin T.S."/>
            <person name="Henrissat B."/>
            <person name="Wilson D.B."/>
            <person name="McBride M.J."/>
        </authorList>
    </citation>
    <scope>NUCLEOTIDE SEQUENCE [LARGE SCALE GENOMIC DNA]</scope>
    <source>
        <strain>ATCC 33406 / DSM 1761 / JCM 20678 / CIP 103989 / IAM 12607 / NBRC 15051 / NCIMB 9469 / D465</strain>
    </source>
</reference>
<evidence type="ECO:0000255" key="1">
    <source>
        <dbReference type="HAMAP-Rule" id="MF_00736"/>
    </source>
</evidence>
<evidence type="ECO:0000305" key="2"/>
<protein>
    <recommendedName>
        <fullName evidence="1">Large ribosomal subunit protein uL11</fullName>
    </recommendedName>
    <alternativeName>
        <fullName evidence="2">50S ribosomal protein L11</fullName>
    </alternativeName>
</protein>
<accession>Q11QA1</accession>
<feature type="chain" id="PRO_0000258145" description="Large ribosomal subunit protein uL11">
    <location>
        <begin position="1"/>
        <end position="147"/>
    </location>
</feature>
<dbReference type="EMBL" id="CP000383">
    <property type="protein sequence ID" value="ABG60413.1"/>
    <property type="molecule type" value="Genomic_DNA"/>
</dbReference>
<dbReference type="RefSeq" id="WP_011586522.1">
    <property type="nucleotide sequence ID" value="NZ_FPJX01000011.1"/>
</dbReference>
<dbReference type="SMR" id="Q11QA1"/>
<dbReference type="STRING" id="269798.CHU_3173"/>
<dbReference type="KEGG" id="chu:CHU_3173"/>
<dbReference type="eggNOG" id="COG0080">
    <property type="taxonomic scope" value="Bacteria"/>
</dbReference>
<dbReference type="HOGENOM" id="CLU_074237_2_1_10"/>
<dbReference type="OrthoDB" id="9802408at2"/>
<dbReference type="Proteomes" id="UP000001822">
    <property type="component" value="Chromosome"/>
</dbReference>
<dbReference type="GO" id="GO:0022625">
    <property type="term" value="C:cytosolic large ribosomal subunit"/>
    <property type="evidence" value="ECO:0007669"/>
    <property type="project" value="TreeGrafter"/>
</dbReference>
<dbReference type="GO" id="GO:0070180">
    <property type="term" value="F:large ribosomal subunit rRNA binding"/>
    <property type="evidence" value="ECO:0007669"/>
    <property type="project" value="UniProtKB-UniRule"/>
</dbReference>
<dbReference type="GO" id="GO:0003735">
    <property type="term" value="F:structural constituent of ribosome"/>
    <property type="evidence" value="ECO:0007669"/>
    <property type="project" value="InterPro"/>
</dbReference>
<dbReference type="GO" id="GO:0006412">
    <property type="term" value="P:translation"/>
    <property type="evidence" value="ECO:0007669"/>
    <property type="project" value="UniProtKB-UniRule"/>
</dbReference>
<dbReference type="CDD" id="cd00349">
    <property type="entry name" value="Ribosomal_L11"/>
    <property type="match status" value="1"/>
</dbReference>
<dbReference type="FunFam" id="1.10.10.250:FF:000001">
    <property type="entry name" value="50S ribosomal protein L11"/>
    <property type="match status" value="1"/>
</dbReference>
<dbReference type="FunFam" id="3.30.1550.10:FF:000001">
    <property type="entry name" value="50S ribosomal protein L11"/>
    <property type="match status" value="1"/>
</dbReference>
<dbReference type="Gene3D" id="1.10.10.250">
    <property type="entry name" value="Ribosomal protein L11, C-terminal domain"/>
    <property type="match status" value="1"/>
</dbReference>
<dbReference type="Gene3D" id="3.30.1550.10">
    <property type="entry name" value="Ribosomal protein L11/L12, N-terminal domain"/>
    <property type="match status" value="1"/>
</dbReference>
<dbReference type="HAMAP" id="MF_00736">
    <property type="entry name" value="Ribosomal_uL11"/>
    <property type="match status" value="1"/>
</dbReference>
<dbReference type="InterPro" id="IPR000911">
    <property type="entry name" value="Ribosomal_uL11"/>
</dbReference>
<dbReference type="InterPro" id="IPR006519">
    <property type="entry name" value="Ribosomal_uL11_bac-typ"/>
</dbReference>
<dbReference type="InterPro" id="IPR020783">
    <property type="entry name" value="Ribosomal_uL11_C"/>
</dbReference>
<dbReference type="InterPro" id="IPR036769">
    <property type="entry name" value="Ribosomal_uL11_C_sf"/>
</dbReference>
<dbReference type="InterPro" id="IPR020785">
    <property type="entry name" value="Ribosomal_uL11_CS"/>
</dbReference>
<dbReference type="InterPro" id="IPR020784">
    <property type="entry name" value="Ribosomal_uL11_N"/>
</dbReference>
<dbReference type="InterPro" id="IPR036796">
    <property type="entry name" value="Ribosomal_uL11_N_sf"/>
</dbReference>
<dbReference type="NCBIfam" id="TIGR01632">
    <property type="entry name" value="L11_bact"/>
    <property type="match status" value="1"/>
</dbReference>
<dbReference type="PANTHER" id="PTHR11661">
    <property type="entry name" value="60S RIBOSOMAL PROTEIN L12"/>
    <property type="match status" value="1"/>
</dbReference>
<dbReference type="PANTHER" id="PTHR11661:SF1">
    <property type="entry name" value="LARGE RIBOSOMAL SUBUNIT PROTEIN UL11M"/>
    <property type="match status" value="1"/>
</dbReference>
<dbReference type="Pfam" id="PF00298">
    <property type="entry name" value="Ribosomal_L11"/>
    <property type="match status" value="1"/>
</dbReference>
<dbReference type="Pfam" id="PF03946">
    <property type="entry name" value="Ribosomal_L11_N"/>
    <property type="match status" value="1"/>
</dbReference>
<dbReference type="SMART" id="SM00649">
    <property type="entry name" value="RL11"/>
    <property type="match status" value="1"/>
</dbReference>
<dbReference type="SUPFAM" id="SSF54747">
    <property type="entry name" value="Ribosomal L11/L12e N-terminal domain"/>
    <property type="match status" value="1"/>
</dbReference>
<dbReference type="SUPFAM" id="SSF46906">
    <property type="entry name" value="Ribosomal protein L11, C-terminal domain"/>
    <property type="match status" value="1"/>
</dbReference>
<dbReference type="PROSITE" id="PS00359">
    <property type="entry name" value="RIBOSOMAL_L11"/>
    <property type="match status" value="1"/>
</dbReference>
<comment type="function">
    <text evidence="1">Forms part of the ribosomal stalk which helps the ribosome interact with GTP-bound translation factors.</text>
</comment>
<comment type="subunit">
    <text evidence="1">Part of the ribosomal stalk of the 50S ribosomal subunit. Interacts with L10 and the large rRNA to form the base of the stalk. L10 forms an elongated spine to which L12 dimers bind in a sequential fashion forming a multimeric L10(L12)X complex.</text>
</comment>
<comment type="PTM">
    <text evidence="1">One or more lysine residues are methylated.</text>
</comment>
<comment type="similarity">
    <text evidence="1">Belongs to the universal ribosomal protein uL11 family.</text>
</comment>
<sequence length="147" mass="15716">MAKEITGYVKLQIKGGAANPSPPVGPALGSKGLNIMEFCKQFNARTQDKPGVLLPVLITVYTDKSFDFVVKTPPAAILLAEAAKIKKGSAEPNRVKVGSVNWDQIRTIAETKMPDLNAFKIESAMKMVAGTARSMGLTVSGKAPWEN</sequence>
<name>RL11_CYTH3</name>
<proteinExistence type="inferred from homology"/>
<keyword id="KW-0488">Methylation</keyword>
<keyword id="KW-1185">Reference proteome</keyword>
<keyword id="KW-0687">Ribonucleoprotein</keyword>
<keyword id="KW-0689">Ribosomal protein</keyword>
<keyword id="KW-0694">RNA-binding</keyword>
<keyword id="KW-0699">rRNA-binding</keyword>